<sequence>MLYQQISQNKQRTVVLLVVFFALLALIGASAGYLLLDNYAMGLVLALVIGVIYATSMIFQSTSLVMSMNNAREVTEKEAPGFFHIVEDMAMVAQIPMPRVFIIEDPSLNAFATGSSPQNAAVAATTGLLEVMNREELEGVIGHEISHIRNYDIRISTIAVALASAVTVISSIGGRMLWYGGGSRRQRDDGDDDVLRIITLLLSLLSLLLAPLVASLIQLAISRQREYLADASSVELTRNPQGMIKALEKLQLSQPMKHPVDDASAALYINEPRKKRSFSSLFSTHPPIEERIERLKNM</sequence>
<protein>
    <recommendedName>
        <fullName evidence="1">Protease HtpX homolog</fullName>
        <ecNumber evidence="1">3.4.24.-</ecNumber>
    </recommendedName>
</protein>
<name>HTPX_STRPC</name>
<feature type="chain" id="PRO_1000020951" description="Protease HtpX homolog">
    <location>
        <begin position="1"/>
        <end position="298"/>
    </location>
</feature>
<feature type="transmembrane region" description="Helical" evidence="1">
    <location>
        <begin position="14"/>
        <end position="34"/>
    </location>
</feature>
<feature type="transmembrane region" description="Helical" evidence="1">
    <location>
        <begin position="39"/>
        <end position="59"/>
    </location>
</feature>
<feature type="transmembrane region" description="Helical" evidence="1">
    <location>
        <begin position="158"/>
        <end position="178"/>
    </location>
</feature>
<feature type="transmembrane region" description="Helical" evidence="1">
    <location>
        <begin position="197"/>
        <end position="217"/>
    </location>
</feature>
<feature type="active site" evidence="1">
    <location>
        <position position="144"/>
    </location>
</feature>
<feature type="binding site" evidence="1">
    <location>
        <position position="143"/>
    </location>
    <ligand>
        <name>Zn(2+)</name>
        <dbReference type="ChEBI" id="CHEBI:29105"/>
        <note>catalytic</note>
    </ligand>
</feature>
<feature type="binding site" evidence="1">
    <location>
        <position position="147"/>
    </location>
    <ligand>
        <name>Zn(2+)</name>
        <dbReference type="ChEBI" id="CHEBI:29105"/>
        <note>catalytic</note>
    </ligand>
</feature>
<feature type="binding site" evidence="1">
    <location>
        <position position="226"/>
    </location>
    <ligand>
        <name>Zn(2+)</name>
        <dbReference type="ChEBI" id="CHEBI:29105"/>
        <note>catalytic</note>
    </ligand>
</feature>
<accession>Q1JND2</accession>
<organism>
    <name type="scientific">Streptococcus pyogenes serotype M12 (strain MGAS9429)</name>
    <dbReference type="NCBI Taxonomy" id="370551"/>
    <lineage>
        <taxon>Bacteria</taxon>
        <taxon>Bacillati</taxon>
        <taxon>Bacillota</taxon>
        <taxon>Bacilli</taxon>
        <taxon>Lactobacillales</taxon>
        <taxon>Streptococcaceae</taxon>
        <taxon>Streptococcus</taxon>
    </lineage>
</organism>
<dbReference type="EC" id="3.4.24.-" evidence="1"/>
<dbReference type="EMBL" id="CP000259">
    <property type="protein sequence ID" value="ABF31467.1"/>
    <property type="molecule type" value="Genomic_DNA"/>
</dbReference>
<dbReference type="RefSeq" id="WP_002985953.1">
    <property type="nucleotide sequence ID" value="NC_008021.1"/>
</dbReference>
<dbReference type="SMR" id="Q1JND2"/>
<dbReference type="GeneID" id="69901385"/>
<dbReference type="KEGG" id="spk:MGAS9429_Spy0279"/>
<dbReference type="HOGENOM" id="CLU_042266_2_1_9"/>
<dbReference type="Proteomes" id="UP000002433">
    <property type="component" value="Chromosome"/>
</dbReference>
<dbReference type="GO" id="GO:0005886">
    <property type="term" value="C:plasma membrane"/>
    <property type="evidence" value="ECO:0007669"/>
    <property type="project" value="UniProtKB-SubCell"/>
</dbReference>
<dbReference type="GO" id="GO:0004222">
    <property type="term" value="F:metalloendopeptidase activity"/>
    <property type="evidence" value="ECO:0007669"/>
    <property type="project" value="UniProtKB-UniRule"/>
</dbReference>
<dbReference type="GO" id="GO:0008270">
    <property type="term" value="F:zinc ion binding"/>
    <property type="evidence" value="ECO:0007669"/>
    <property type="project" value="UniProtKB-UniRule"/>
</dbReference>
<dbReference type="GO" id="GO:0006508">
    <property type="term" value="P:proteolysis"/>
    <property type="evidence" value="ECO:0007669"/>
    <property type="project" value="UniProtKB-KW"/>
</dbReference>
<dbReference type="CDD" id="cd07340">
    <property type="entry name" value="M48B_Htpx_like"/>
    <property type="match status" value="1"/>
</dbReference>
<dbReference type="Gene3D" id="3.30.2010.10">
    <property type="entry name" value="Metalloproteases ('zincins'), catalytic domain"/>
    <property type="match status" value="1"/>
</dbReference>
<dbReference type="HAMAP" id="MF_00188">
    <property type="entry name" value="Pept_M48_protease_HtpX"/>
    <property type="match status" value="1"/>
</dbReference>
<dbReference type="InterPro" id="IPR050083">
    <property type="entry name" value="HtpX_protease"/>
</dbReference>
<dbReference type="InterPro" id="IPR022919">
    <property type="entry name" value="Pept_M48_protease_HtpX"/>
</dbReference>
<dbReference type="InterPro" id="IPR001915">
    <property type="entry name" value="Peptidase_M48"/>
</dbReference>
<dbReference type="NCBIfam" id="NF003425">
    <property type="entry name" value="PRK04897.1"/>
    <property type="match status" value="1"/>
</dbReference>
<dbReference type="PANTHER" id="PTHR43221">
    <property type="entry name" value="PROTEASE HTPX"/>
    <property type="match status" value="1"/>
</dbReference>
<dbReference type="PANTHER" id="PTHR43221:SF1">
    <property type="entry name" value="PROTEASE HTPX"/>
    <property type="match status" value="1"/>
</dbReference>
<dbReference type="Pfam" id="PF01435">
    <property type="entry name" value="Peptidase_M48"/>
    <property type="match status" value="1"/>
</dbReference>
<reference key="1">
    <citation type="journal article" date="2006" name="Proc. Natl. Acad. Sci. U.S.A.">
        <title>Molecular genetic anatomy of inter- and intraserotype variation in the human bacterial pathogen group A Streptococcus.</title>
        <authorList>
            <person name="Beres S.B."/>
            <person name="Richter E.W."/>
            <person name="Nagiec M.J."/>
            <person name="Sumby P."/>
            <person name="Porcella S.F."/>
            <person name="DeLeo F.R."/>
            <person name="Musser J.M."/>
        </authorList>
    </citation>
    <scope>NUCLEOTIDE SEQUENCE [LARGE SCALE GENOMIC DNA]</scope>
    <source>
        <strain>MGAS9429</strain>
    </source>
</reference>
<comment type="cofactor">
    <cofactor evidence="1">
        <name>Zn(2+)</name>
        <dbReference type="ChEBI" id="CHEBI:29105"/>
    </cofactor>
    <text evidence="1">Binds 1 zinc ion per subunit.</text>
</comment>
<comment type="subcellular location">
    <subcellularLocation>
        <location evidence="1">Cell membrane</location>
        <topology evidence="1">Multi-pass membrane protein</topology>
    </subcellularLocation>
</comment>
<comment type="similarity">
    <text evidence="1">Belongs to the peptidase M48B family.</text>
</comment>
<evidence type="ECO:0000255" key="1">
    <source>
        <dbReference type="HAMAP-Rule" id="MF_00188"/>
    </source>
</evidence>
<proteinExistence type="inferred from homology"/>
<keyword id="KW-1003">Cell membrane</keyword>
<keyword id="KW-0378">Hydrolase</keyword>
<keyword id="KW-0472">Membrane</keyword>
<keyword id="KW-0479">Metal-binding</keyword>
<keyword id="KW-0482">Metalloprotease</keyword>
<keyword id="KW-0645">Protease</keyword>
<keyword id="KW-0812">Transmembrane</keyword>
<keyword id="KW-1133">Transmembrane helix</keyword>
<keyword id="KW-0862">Zinc</keyword>
<gene>
    <name evidence="1" type="primary">htpX</name>
    <name type="ordered locus">MGAS9429_Spy0279</name>
</gene>